<proteinExistence type="inferred from homology"/>
<gene>
    <name evidence="1" type="primary">miaA</name>
    <name type="ordered locus">DIP1443</name>
</gene>
<organism>
    <name type="scientific">Corynebacterium diphtheriae (strain ATCC 700971 / NCTC 13129 / Biotype gravis)</name>
    <dbReference type="NCBI Taxonomy" id="257309"/>
    <lineage>
        <taxon>Bacteria</taxon>
        <taxon>Bacillati</taxon>
        <taxon>Actinomycetota</taxon>
        <taxon>Actinomycetes</taxon>
        <taxon>Mycobacteriales</taxon>
        <taxon>Corynebacteriaceae</taxon>
        <taxon>Corynebacterium</taxon>
    </lineage>
</organism>
<keyword id="KW-0067">ATP-binding</keyword>
<keyword id="KW-0460">Magnesium</keyword>
<keyword id="KW-0547">Nucleotide-binding</keyword>
<keyword id="KW-1185">Reference proteome</keyword>
<keyword id="KW-0808">Transferase</keyword>
<keyword id="KW-0819">tRNA processing</keyword>
<name>MIAA_CORDI</name>
<reference key="1">
    <citation type="journal article" date="2003" name="Nucleic Acids Res.">
        <title>The complete genome sequence and analysis of Corynebacterium diphtheriae NCTC13129.</title>
        <authorList>
            <person name="Cerdeno-Tarraga A.-M."/>
            <person name="Efstratiou A."/>
            <person name="Dover L.G."/>
            <person name="Holden M.T.G."/>
            <person name="Pallen M.J."/>
            <person name="Bentley S.D."/>
            <person name="Besra G.S."/>
            <person name="Churcher C.M."/>
            <person name="James K.D."/>
            <person name="De Zoysa A."/>
            <person name="Chillingworth T."/>
            <person name="Cronin A."/>
            <person name="Dowd L."/>
            <person name="Feltwell T."/>
            <person name="Hamlin N."/>
            <person name="Holroyd S."/>
            <person name="Jagels K."/>
            <person name="Moule S."/>
            <person name="Quail M.A."/>
            <person name="Rabbinowitsch E."/>
            <person name="Rutherford K.M."/>
            <person name="Thomson N.R."/>
            <person name="Unwin L."/>
            <person name="Whitehead S."/>
            <person name="Barrell B.G."/>
            <person name="Parkhill J."/>
        </authorList>
    </citation>
    <scope>NUCLEOTIDE SEQUENCE [LARGE SCALE GENOMIC DNA]</scope>
    <source>
        <strain>ATCC 700971 / NCTC 13129 / Biotype gravis</strain>
    </source>
</reference>
<protein>
    <recommendedName>
        <fullName evidence="1">tRNA dimethylallyltransferase</fullName>
        <ecNumber evidence="1">2.5.1.75</ecNumber>
    </recommendedName>
    <alternativeName>
        <fullName evidence="1">Dimethylallyl diphosphate:tRNA dimethylallyltransferase</fullName>
        <shortName evidence="1">DMAPP:tRNA dimethylallyltransferase</shortName>
        <shortName evidence="1">DMATase</shortName>
    </alternativeName>
    <alternativeName>
        <fullName evidence="1">Isopentenyl-diphosphate:tRNA isopentenyltransferase</fullName>
        <shortName evidence="1">IPP transferase</shortName>
        <shortName evidence="1">IPPT</shortName>
        <shortName evidence="1">IPTase</shortName>
    </alternativeName>
</protein>
<accession>Q6NGR5</accession>
<evidence type="ECO:0000255" key="1">
    <source>
        <dbReference type="HAMAP-Rule" id="MF_00185"/>
    </source>
</evidence>
<dbReference type="EC" id="2.5.1.75" evidence="1"/>
<dbReference type="EMBL" id="BX248358">
    <property type="protein sequence ID" value="CAE49971.1"/>
    <property type="molecule type" value="Genomic_DNA"/>
</dbReference>
<dbReference type="RefSeq" id="WP_003851856.1">
    <property type="nucleotide sequence ID" value="NC_002935.2"/>
</dbReference>
<dbReference type="SMR" id="Q6NGR5"/>
<dbReference type="STRING" id="257309.DIP1443"/>
<dbReference type="GeneID" id="29421195"/>
<dbReference type="KEGG" id="cdi:DIP1443"/>
<dbReference type="HOGENOM" id="CLU_032616_0_1_11"/>
<dbReference type="Proteomes" id="UP000002198">
    <property type="component" value="Chromosome"/>
</dbReference>
<dbReference type="GO" id="GO:0005524">
    <property type="term" value="F:ATP binding"/>
    <property type="evidence" value="ECO:0007669"/>
    <property type="project" value="UniProtKB-UniRule"/>
</dbReference>
<dbReference type="GO" id="GO:0052381">
    <property type="term" value="F:tRNA dimethylallyltransferase activity"/>
    <property type="evidence" value="ECO:0007669"/>
    <property type="project" value="UniProtKB-UniRule"/>
</dbReference>
<dbReference type="GO" id="GO:0006400">
    <property type="term" value="P:tRNA modification"/>
    <property type="evidence" value="ECO:0007669"/>
    <property type="project" value="TreeGrafter"/>
</dbReference>
<dbReference type="FunFam" id="1.10.20.140:FF:000001">
    <property type="entry name" value="tRNA dimethylallyltransferase"/>
    <property type="match status" value="1"/>
</dbReference>
<dbReference type="Gene3D" id="1.10.20.140">
    <property type="match status" value="1"/>
</dbReference>
<dbReference type="Gene3D" id="3.40.50.300">
    <property type="entry name" value="P-loop containing nucleotide triphosphate hydrolases"/>
    <property type="match status" value="1"/>
</dbReference>
<dbReference type="HAMAP" id="MF_00185">
    <property type="entry name" value="IPP_trans"/>
    <property type="match status" value="1"/>
</dbReference>
<dbReference type="InterPro" id="IPR039657">
    <property type="entry name" value="Dimethylallyltransferase"/>
</dbReference>
<dbReference type="InterPro" id="IPR018022">
    <property type="entry name" value="IPT"/>
</dbReference>
<dbReference type="InterPro" id="IPR027417">
    <property type="entry name" value="P-loop_NTPase"/>
</dbReference>
<dbReference type="NCBIfam" id="TIGR00174">
    <property type="entry name" value="miaA"/>
    <property type="match status" value="1"/>
</dbReference>
<dbReference type="PANTHER" id="PTHR11088">
    <property type="entry name" value="TRNA DIMETHYLALLYLTRANSFERASE"/>
    <property type="match status" value="1"/>
</dbReference>
<dbReference type="PANTHER" id="PTHR11088:SF60">
    <property type="entry name" value="TRNA DIMETHYLALLYLTRANSFERASE"/>
    <property type="match status" value="1"/>
</dbReference>
<dbReference type="Pfam" id="PF01715">
    <property type="entry name" value="IPPT"/>
    <property type="match status" value="1"/>
</dbReference>
<dbReference type="SUPFAM" id="SSF52540">
    <property type="entry name" value="P-loop containing nucleoside triphosphate hydrolases"/>
    <property type="match status" value="1"/>
</dbReference>
<feature type="chain" id="PRO_0000163906" description="tRNA dimethylallyltransferase">
    <location>
        <begin position="1"/>
        <end position="302"/>
    </location>
</feature>
<feature type="region of interest" description="Interaction with substrate tRNA" evidence="1">
    <location>
        <begin position="37"/>
        <end position="40"/>
    </location>
</feature>
<feature type="binding site" evidence="1">
    <location>
        <begin position="12"/>
        <end position="19"/>
    </location>
    <ligand>
        <name>ATP</name>
        <dbReference type="ChEBI" id="CHEBI:30616"/>
    </ligand>
</feature>
<feature type="binding site" evidence="1">
    <location>
        <begin position="14"/>
        <end position="19"/>
    </location>
    <ligand>
        <name>substrate</name>
    </ligand>
</feature>
<feature type="site" description="Interaction with substrate tRNA" evidence="1">
    <location>
        <position position="103"/>
    </location>
</feature>
<feature type="site" description="Interaction with substrate tRNA" evidence="1">
    <location>
        <position position="124"/>
    </location>
</feature>
<sequence>MDNPTTPIAVVGPTASGKSALGVSLAHHLNGEVVNVDSMQLYKGMDIGTAKLTLEEREGIVHHLLDVWDISETASVARYQSQAIAVVEDIQRRGKTPILVGGSMLYVQSLVDDWQFPPTDPSVRAKWESKLNEVGVEALHALLAQKDPQAASIIELKDPRRTVRALEVIELTGKPFNASQPPKNAPPRWNTQIIGLGTNTEWLNPRIDLRTELMFEKGFVHEVENLVGKGLIADSTAGHAIGYAQVLQHFAGELSVDEMIEHTKIGTRRYVRRQRSWFKRDPRIHWIDASGDTFSMALSLLS</sequence>
<comment type="function">
    <text evidence="1">Catalyzes the transfer of a dimethylallyl group onto the adenine at position 37 in tRNAs that read codons beginning with uridine, leading to the formation of N6-(dimethylallyl)adenosine (i(6)A).</text>
</comment>
<comment type="catalytic activity">
    <reaction evidence="1">
        <text>adenosine(37) in tRNA + dimethylallyl diphosphate = N(6)-dimethylallyladenosine(37) in tRNA + diphosphate</text>
        <dbReference type="Rhea" id="RHEA:26482"/>
        <dbReference type="Rhea" id="RHEA-COMP:10162"/>
        <dbReference type="Rhea" id="RHEA-COMP:10375"/>
        <dbReference type="ChEBI" id="CHEBI:33019"/>
        <dbReference type="ChEBI" id="CHEBI:57623"/>
        <dbReference type="ChEBI" id="CHEBI:74411"/>
        <dbReference type="ChEBI" id="CHEBI:74415"/>
        <dbReference type="EC" id="2.5.1.75"/>
    </reaction>
</comment>
<comment type="cofactor">
    <cofactor evidence="1">
        <name>Mg(2+)</name>
        <dbReference type="ChEBI" id="CHEBI:18420"/>
    </cofactor>
</comment>
<comment type="subunit">
    <text evidence="1">Monomer.</text>
</comment>
<comment type="similarity">
    <text evidence="1">Belongs to the IPP transferase family.</text>
</comment>